<reference key="1">
    <citation type="journal article" date="1986" name="J. Bacteriol.">
        <title>Cloning and nucleotide sequencing of genes for three small, acid-soluble proteins from Bacillus subtilis spores.</title>
        <authorList>
            <person name="Connors M.J."/>
            <person name="Mason J.M."/>
            <person name="Setlow P."/>
        </authorList>
    </citation>
    <scope>NUCLEOTIDE SEQUENCE [GENOMIC DNA]</scope>
</reference>
<reference key="2">
    <citation type="journal article" date="1997" name="Nature">
        <title>The complete genome sequence of the Gram-positive bacterium Bacillus subtilis.</title>
        <authorList>
            <person name="Kunst F."/>
            <person name="Ogasawara N."/>
            <person name="Moszer I."/>
            <person name="Albertini A.M."/>
            <person name="Alloni G."/>
            <person name="Azevedo V."/>
            <person name="Bertero M.G."/>
            <person name="Bessieres P."/>
            <person name="Bolotin A."/>
            <person name="Borchert S."/>
            <person name="Borriss R."/>
            <person name="Boursier L."/>
            <person name="Brans A."/>
            <person name="Braun M."/>
            <person name="Brignell S.C."/>
            <person name="Bron S."/>
            <person name="Brouillet S."/>
            <person name="Bruschi C.V."/>
            <person name="Caldwell B."/>
            <person name="Capuano V."/>
            <person name="Carter N.M."/>
            <person name="Choi S.-K."/>
            <person name="Codani J.-J."/>
            <person name="Connerton I.F."/>
            <person name="Cummings N.J."/>
            <person name="Daniel R.A."/>
            <person name="Denizot F."/>
            <person name="Devine K.M."/>
            <person name="Duesterhoeft A."/>
            <person name="Ehrlich S.D."/>
            <person name="Emmerson P.T."/>
            <person name="Entian K.-D."/>
            <person name="Errington J."/>
            <person name="Fabret C."/>
            <person name="Ferrari E."/>
            <person name="Foulger D."/>
            <person name="Fritz C."/>
            <person name="Fujita M."/>
            <person name="Fujita Y."/>
            <person name="Fuma S."/>
            <person name="Galizzi A."/>
            <person name="Galleron N."/>
            <person name="Ghim S.-Y."/>
            <person name="Glaser P."/>
            <person name="Goffeau A."/>
            <person name="Golightly E.J."/>
            <person name="Grandi G."/>
            <person name="Guiseppi G."/>
            <person name="Guy B.J."/>
            <person name="Haga K."/>
            <person name="Haiech J."/>
            <person name="Harwood C.R."/>
            <person name="Henaut A."/>
            <person name="Hilbert H."/>
            <person name="Holsappel S."/>
            <person name="Hosono S."/>
            <person name="Hullo M.-F."/>
            <person name="Itaya M."/>
            <person name="Jones L.-M."/>
            <person name="Joris B."/>
            <person name="Karamata D."/>
            <person name="Kasahara Y."/>
            <person name="Klaerr-Blanchard M."/>
            <person name="Klein C."/>
            <person name="Kobayashi Y."/>
            <person name="Koetter P."/>
            <person name="Koningstein G."/>
            <person name="Krogh S."/>
            <person name="Kumano M."/>
            <person name="Kurita K."/>
            <person name="Lapidus A."/>
            <person name="Lardinois S."/>
            <person name="Lauber J."/>
            <person name="Lazarevic V."/>
            <person name="Lee S.-M."/>
            <person name="Levine A."/>
            <person name="Liu H."/>
            <person name="Masuda S."/>
            <person name="Mauel C."/>
            <person name="Medigue C."/>
            <person name="Medina N."/>
            <person name="Mellado R.P."/>
            <person name="Mizuno M."/>
            <person name="Moestl D."/>
            <person name="Nakai S."/>
            <person name="Noback M."/>
            <person name="Noone D."/>
            <person name="O'Reilly M."/>
            <person name="Ogawa K."/>
            <person name="Ogiwara A."/>
            <person name="Oudega B."/>
            <person name="Park S.-H."/>
            <person name="Parro V."/>
            <person name="Pohl T.M."/>
            <person name="Portetelle D."/>
            <person name="Porwollik S."/>
            <person name="Prescott A.M."/>
            <person name="Presecan E."/>
            <person name="Pujic P."/>
            <person name="Purnelle B."/>
            <person name="Rapoport G."/>
            <person name="Rey M."/>
            <person name="Reynolds S."/>
            <person name="Rieger M."/>
            <person name="Rivolta C."/>
            <person name="Rocha E."/>
            <person name="Roche B."/>
            <person name="Rose M."/>
            <person name="Sadaie Y."/>
            <person name="Sato T."/>
            <person name="Scanlan E."/>
            <person name="Schleich S."/>
            <person name="Schroeter R."/>
            <person name="Scoffone F."/>
            <person name="Sekiguchi J."/>
            <person name="Sekowska A."/>
            <person name="Seror S.J."/>
            <person name="Serror P."/>
            <person name="Shin B.-S."/>
            <person name="Soldo B."/>
            <person name="Sorokin A."/>
            <person name="Tacconi E."/>
            <person name="Takagi T."/>
            <person name="Takahashi H."/>
            <person name="Takemaru K."/>
            <person name="Takeuchi M."/>
            <person name="Tamakoshi A."/>
            <person name="Tanaka T."/>
            <person name="Terpstra P."/>
            <person name="Tognoni A."/>
            <person name="Tosato V."/>
            <person name="Uchiyama S."/>
            <person name="Vandenbol M."/>
            <person name="Vannier F."/>
            <person name="Vassarotti A."/>
            <person name="Viari A."/>
            <person name="Wambutt R."/>
            <person name="Wedler E."/>
            <person name="Wedler H."/>
            <person name="Weitzenegger T."/>
            <person name="Winters P."/>
            <person name="Wipat A."/>
            <person name="Yamamoto H."/>
            <person name="Yamane K."/>
            <person name="Yasumoto K."/>
            <person name="Yata K."/>
            <person name="Yoshida K."/>
            <person name="Yoshikawa H.-F."/>
            <person name="Zumstein E."/>
            <person name="Yoshikawa H."/>
            <person name="Danchin A."/>
        </authorList>
    </citation>
    <scope>NUCLEOTIDE SEQUENCE [LARGE SCALE GENOMIC DNA]</scope>
    <source>
        <strain>168</strain>
    </source>
</reference>
<reference key="3">
    <citation type="journal article" date="1998" name="J. Bacteriol.">
        <title>New small, acid-soluble proteins unique to spores of Bacillus subtilis: identification of the coding genes and regulation and function of two of these genes.</title>
        <authorList>
            <person name="Bagyan I."/>
            <person name="Setlow B."/>
            <person name="Setlow P."/>
        </authorList>
    </citation>
    <scope>PROTEIN SEQUENCE OF 2-13</scope>
</reference>
<organism>
    <name type="scientific">Bacillus subtilis (strain 168)</name>
    <dbReference type="NCBI Taxonomy" id="224308"/>
    <lineage>
        <taxon>Bacteria</taxon>
        <taxon>Bacillati</taxon>
        <taxon>Bacillota</taxon>
        <taxon>Bacilli</taxon>
        <taxon>Bacillales</taxon>
        <taxon>Bacillaceae</taxon>
        <taxon>Bacillus</taxon>
    </lineage>
</organism>
<accession>P04833</accession>
<protein>
    <recommendedName>
        <fullName>Small, acid-soluble spore protein D</fullName>
        <shortName>SASP</shortName>
    </recommendedName>
</protein>
<comment type="function">
    <text>SASP are bound to spore DNA. They are double-stranded DNA-binding proteins that cause DNA to change to an a-like conformation. They protect the DNA backbone from chemical and enzymatic cleavage and are thus involved in dormant spore's high resistance to UV light.</text>
</comment>
<comment type="miscellaneous">
    <text>SASP are degraded in the first minutes of spore germination and provide amino acids for both new protein synthesis and metabolism.</text>
</comment>
<comment type="similarity">
    <text evidence="2">Belongs to the alpha/beta-type SASP family.</text>
</comment>
<dbReference type="EMBL" id="M12622">
    <property type="protein sequence ID" value="AAA22835.1"/>
    <property type="molecule type" value="Genomic_DNA"/>
</dbReference>
<dbReference type="EMBL" id="AL009126">
    <property type="protein sequence ID" value="CAB13220.1"/>
    <property type="molecule type" value="Genomic_DNA"/>
</dbReference>
<dbReference type="PIR" id="D24546">
    <property type="entry name" value="D24546"/>
</dbReference>
<dbReference type="RefSeq" id="NP_389230.1">
    <property type="nucleotide sequence ID" value="NC_000964.3"/>
</dbReference>
<dbReference type="RefSeq" id="WP_003218568.1">
    <property type="nucleotide sequence ID" value="NZ_OZ025638.1"/>
</dbReference>
<dbReference type="SMR" id="P04833"/>
<dbReference type="FunCoup" id="P04833">
    <property type="interactions" value="103"/>
</dbReference>
<dbReference type="STRING" id="224308.BSU13470"/>
<dbReference type="PaxDb" id="224308-BSU13470"/>
<dbReference type="EnsemblBacteria" id="CAB13220">
    <property type="protein sequence ID" value="CAB13220"/>
    <property type="gene ID" value="BSU_13470"/>
</dbReference>
<dbReference type="GeneID" id="86874160"/>
<dbReference type="GeneID" id="939362"/>
<dbReference type="KEGG" id="bsu:BSU13470"/>
<dbReference type="PATRIC" id="fig|224308.179.peg.1462"/>
<dbReference type="eggNOG" id="ENOG5032YR8">
    <property type="taxonomic scope" value="Bacteria"/>
</dbReference>
<dbReference type="InParanoid" id="P04833"/>
<dbReference type="OrthoDB" id="2627848at2"/>
<dbReference type="PhylomeDB" id="P04833"/>
<dbReference type="BioCyc" id="BSUB:BSU13470-MONOMER"/>
<dbReference type="PRO" id="PR:P04833"/>
<dbReference type="Proteomes" id="UP000001570">
    <property type="component" value="Chromosome"/>
</dbReference>
<dbReference type="GO" id="GO:0003690">
    <property type="term" value="F:double-stranded DNA binding"/>
    <property type="evidence" value="ECO:0007669"/>
    <property type="project" value="InterPro"/>
</dbReference>
<dbReference type="GO" id="GO:0006265">
    <property type="term" value="P:DNA topological change"/>
    <property type="evidence" value="ECO:0007669"/>
    <property type="project" value="InterPro"/>
</dbReference>
<dbReference type="GO" id="GO:0030435">
    <property type="term" value="P:sporulation resulting in formation of a cellular spore"/>
    <property type="evidence" value="ECO:0007669"/>
    <property type="project" value="UniProtKB-KW"/>
</dbReference>
<dbReference type="Gene3D" id="6.10.10.80">
    <property type="entry name" value="Small, acid-soluble spore protein, alpha/beta type-like"/>
    <property type="match status" value="1"/>
</dbReference>
<dbReference type="InterPro" id="IPR001448">
    <property type="entry name" value="SASP_alpha/beta-type"/>
</dbReference>
<dbReference type="InterPro" id="IPR018126">
    <property type="entry name" value="SASP_alpha/beta-type_CS"/>
</dbReference>
<dbReference type="InterPro" id="IPR050847">
    <property type="entry name" value="SASP_DNA-binding"/>
</dbReference>
<dbReference type="InterPro" id="IPR038300">
    <property type="entry name" value="SASP_sf_alpha/beta"/>
</dbReference>
<dbReference type="PANTHER" id="PTHR36107">
    <property type="entry name" value="SMALL, ACID-SOLUBLE SPORE PROTEIN A"/>
    <property type="match status" value="1"/>
</dbReference>
<dbReference type="PANTHER" id="PTHR36107:SF1">
    <property type="entry name" value="SMALL, ACID-SOLUBLE SPORE PROTEIN A"/>
    <property type="match status" value="1"/>
</dbReference>
<dbReference type="Pfam" id="PF00269">
    <property type="entry name" value="SASP"/>
    <property type="match status" value="1"/>
</dbReference>
<dbReference type="PROSITE" id="PS00304">
    <property type="entry name" value="SASP_1"/>
    <property type="match status" value="1"/>
</dbReference>
<dbReference type="PROSITE" id="PS00684">
    <property type="entry name" value="SASP_2"/>
    <property type="match status" value="1"/>
</dbReference>
<feature type="initiator methionine" description="Removed" evidence="1">
    <location>
        <position position="1"/>
    </location>
</feature>
<feature type="chain" id="PRO_0000196302" description="Small, acid-soluble spore protein D">
    <location>
        <begin position="2"/>
        <end position="64"/>
    </location>
</feature>
<feature type="site" description="Cleavage; by spore protease">
    <location>
        <begin position="22"/>
        <end position="23"/>
    </location>
</feature>
<name>SSPD_BACSU</name>
<sequence>MASRNKLVVPGVEQALDQFKLEVAQEFGVNLGSDTVARANGSVGGEMTKRLVQQAQSQLNGTTK</sequence>
<evidence type="ECO:0000269" key="1">
    <source>
    </source>
</evidence>
<evidence type="ECO:0000305" key="2"/>
<keyword id="KW-0903">Direct protein sequencing</keyword>
<keyword id="KW-0238">DNA-binding</keyword>
<keyword id="KW-1185">Reference proteome</keyword>
<keyword id="KW-0749">Sporulation</keyword>
<proteinExistence type="evidence at protein level"/>
<gene>
    <name type="primary">sspD</name>
    <name type="ordered locus">BSU13470</name>
</gene>